<dbReference type="EMBL" id="DQ885751">
    <property type="protein sequence ID" value="ABH12260.1"/>
    <property type="molecule type" value="mRNA"/>
</dbReference>
<dbReference type="RefSeq" id="NP_001266581.1">
    <property type="nucleotide sequence ID" value="NM_001279652.1"/>
</dbReference>
<dbReference type="RefSeq" id="XP_018865803.3">
    <property type="nucleotide sequence ID" value="XM_019010258.4"/>
</dbReference>
<dbReference type="RefSeq" id="XP_018865804.3">
    <property type="nucleotide sequence ID" value="XM_019010259.3"/>
</dbReference>
<dbReference type="RefSeq" id="XP_055218447.2">
    <property type="nucleotide sequence ID" value="XM_055362472.2"/>
</dbReference>
<dbReference type="SMR" id="Q0MQ83"/>
<dbReference type="FunCoup" id="Q0MQ83">
    <property type="interactions" value="984"/>
</dbReference>
<dbReference type="STRING" id="9593.ENSGGOP00000052230"/>
<dbReference type="GeneID" id="101134200"/>
<dbReference type="CTD" id="51103"/>
<dbReference type="eggNOG" id="KOG2435">
    <property type="taxonomic scope" value="Eukaryota"/>
</dbReference>
<dbReference type="InParanoid" id="Q0MQ83"/>
<dbReference type="Proteomes" id="UP000001519">
    <property type="component" value="Unplaced"/>
</dbReference>
<dbReference type="GO" id="GO:0005759">
    <property type="term" value="C:mitochondrial matrix"/>
    <property type="evidence" value="ECO:0007669"/>
    <property type="project" value="UniProtKB-SubCell"/>
</dbReference>
<dbReference type="GO" id="GO:0005739">
    <property type="term" value="C:mitochondrion"/>
    <property type="evidence" value="ECO:0000250"/>
    <property type="project" value="UniProtKB"/>
</dbReference>
<dbReference type="GO" id="GO:0051082">
    <property type="term" value="F:unfolded protein binding"/>
    <property type="evidence" value="ECO:0000318"/>
    <property type="project" value="GO_Central"/>
</dbReference>
<dbReference type="GO" id="GO:0006120">
    <property type="term" value="P:mitochondrial electron transport, NADH to ubiquinone"/>
    <property type="evidence" value="ECO:0000318"/>
    <property type="project" value="GO_Central"/>
</dbReference>
<dbReference type="GO" id="GO:0032981">
    <property type="term" value="P:mitochondrial respiratory chain complex I assembly"/>
    <property type="evidence" value="ECO:0000250"/>
    <property type="project" value="UniProtKB"/>
</dbReference>
<dbReference type="Gene3D" id="2.60.120.430">
    <property type="entry name" value="Galactose-binding lectin"/>
    <property type="match status" value="1"/>
</dbReference>
<dbReference type="InterPro" id="IPR008979">
    <property type="entry name" value="Galactose-bd-like_sf"/>
</dbReference>
<dbReference type="InterPro" id="IPR013857">
    <property type="entry name" value="NADH-UbQ_OxRdtase-assoc_prot30"/>
</dbReference>
<dbReference type="InterPro" id="IPR039131">
    <property type="entry name" value="NDUFAF1"/>
</dbReference>
<dbReference type="PANTHER" id="PTHR13194">
    <property type="entry name" value="COMPLEX I INTERMEDIATE-ASSOCIATED PROTEIN 30"/>
    <property type="match status" value="1"/>
</dbReference>
<dbReference type="PANTHER" id="PTHR13194:SF23">
    <property type="entry name" value="COMPLEX I INTERMEDIATE-ASSOCIATED PROTEIN 30, MITOCHONDRIAL"/>
    <property type="match status" value="1"/>
</dbReference>
<dbReference type="Pfam" id="PF08547">
    <property type="entry name" value="CIA30"/>
    <property type="match status" value="1"/>
</dbReference>
<dbReference type="SUPFAM" id="SSF49785">
    <property type="entry name" value="Galactose-binding domain-like"/>
    <property type="match status" value="1"/>
</dbReference>
<comment type="function">
    <text evidence="1">As part of the MCIA complex, involved in the assembly of the mitochondrial complex I.</text>
</comment>
<comment type="subunit">
    <text evidence="1">Part of the mitochondrial complex I assembly/MCIA complex that comprises at least the core subunits TMEM126B, NDUFAF1, ECSIT and ACAD9 and complement subunits such as COA1 and TMEM186. Interacts with ECSIT. Interacts with ACAD9. At early stages of complex I assembly, it is found in intermediate subcomplexes that contain different subunits including NDUFB6, NDUFA6, NDUFA9, NDUFS3, NDUFS7, ND1, ND2 and ND3. Interacts with TMEM70 and TMEM242 (By similarity).</text>
</comment>
<comment type="subcellular location">
    <subcellularLocation>
        <location evidence="1">Mitochondrion</location>
    </subcellularLocation>
    <subcellularLocation>
        <location evidence="1">Mitochondrion matrix</location>
    </subcellularLocation>
    <text evidence="1">Periferally associated with the matrix face of the mitochondrial inner membrane.</text>
</comment>
<comment type="similarity">
    <text evidence="4">Belongs to the CIA30 family.</text>
</comment>
<sequence length="327" mass="37835">MALVHKLLRDTYILRKFSKPTSALYPFLGIRFAEYSSSLQKPVASPGKASSQRKTEGDLQGDHQKEVALDITSSEEKPDVSFDKAIRDEAMYHFRHLKDEIVDHWRGPEGHSLHEVLLEQAKVVWQFRGKEDLDKWTVTSDKTIGGRSEVFLKMGKNNQSALLYGTLSSEAPQDGESTRSGYCAMKSRIPRGAFERKMSYDWSQFNTLYLRVRGDGRPWMVNIKEDTDFFQRTNQMYSYFMFTRGGPYWQEVKIPFSKFFFSNRGRIRDVQHELPLDKISSIGFTLADKVDGPFFLEIDFIGVFTDPAHTEEFAYENSPELNPRLFK</sequence>
<reference key="1">
    <citation type="journal article" date="2006" name="Gene">
        <title>Adaptive selection of mitochondrial complex I subunits during primate radiation.</title>
        <authorList>
            <person name="Mishmar D."/>
            <person name="Ruiz-Pesini E."/>
            <person name="Mondragon-Palomino M."/>
            <person name="Procaccio V."/>
            <person name="Gaut B."/>
            <person name="Wallace D.C."/>
        </authorList>
    </citation>
    <scope>NUCLEOTIDE SEQUENCE [MRNA]</scope>
</reference>
<name>CIA30_GORGO</name>
<accession>Q0MQ83</accession>
<organism>
    <name type="scientific">Gorilla gorilla gorilla</name>
    <name type="common">Western lowland gorilla</name>
    <dbReference type="NCBI Taxonomy" id="9595"/>
    <lineage>
        <taxon>Eukaryota</taxon>
        <taxon>Metazoa</taxon>
        <taxon>Chordata</taxon>
        <taxon>Craniata</taxon>
        <taxon>Vertebrata</taxon>
        <taxon>Euteleostomi</taxon>
        <taxon>Mammalia</taxon>
        <taxon>Eutheria</taxon>
        <taxon>Euarchontoglires</taxon>
        <taxon>Primates</taxon>
        <taxon>Haplorrhini</taxon>
        <taxon>Catarrhini</taxon>
        <taxon>Hominidae</taxon>
        <taxon>Gorilla</taxon>
    </lineage>
</organism>
<protein>
    <recommendedName>
        <fullName evidence="1">Complex I intermediate-associated protein 30, mitochondrial</fullName>
    </recommendedName>
    <alternativeName>
        <fullName>NADH dehydrogenase [ubiquinone] 1 alpha subcomplex assembly factor 1</fullName>
    </alternativeName>
</protein>
<feature type="transit peptide" description="Mitochondrion" evidence="2">
    <location>
        <begin position="1"/>
        <end position="24"/>
    </location>
</feature>
<feature type="chain" id="PRO_0000251468" description="Complex I intermediate-associated protein 30, mitochondrial">
    <location>
        <begin position="25"/>
        <end position="327"/>
    </location>
</feature>
<feature type="region of interest" description="Disordered" evidence="3">
    <location>
        <begin position="42"/>
        <end position="63"/>
    </location>
</feature>
<feature type="compositionally biased region" description="Basic and acidic residues" evidence="3">
    <location>
        <begin position="53"/>
        <end position="63"/>
    </location>
</feature>
<feature type="modified residue" description="Phosphoserine" evidence="1">
    <location>
        <position position="318"/>
    </location>
</feature>
<evidence type="ECO:0000250" key="1">
    <source>
        <dbReference type="UniProtKB" id="Q9Y375"/>
    </source>
</evidence>
<evidence type="ECO:0000255" key="2"/>
<evidence type="ECO:0000256" key="3">
    <source>
        <dbReference type="SAM" id="MobiDB-lite"/>
    </source>
</evidence>
<evidence type="ECO:0000305" key="4"/>
<proteinExistence type="evidence at transcript level"/>
<gene>
    <name evidence="1" type="primary">NDUFAF1</name>
</gene>
<keyword id="KW-0143">Chaperone</keyword>
<keyword id="KW-0496">Mitochondrion</keyword>
<keyword id="KW-0597">Phosphoprotein</keyword>
<keyword id="KW-1185">Reference proteome</keyword>
<keyword id="KW-0809">Transit peptide</keyword>